<comment type="function">
    <text evidence="4">Acyl-ACP thioesterase involved in the production of fatty acids and beta-keto fatty acids. Can produce beta-keto fatty acids of medium chain (8:0 and 10:0) and small amounts of 8:0 fatty acid when expressed in a heterologous organism (E.coli). May play a role in suberin biosynthesis.</text>
</comment>
<comment type="subcellular location">
    <subcellularLocation>
        <location evidence="4">Plastid</location>
        <location evidence="4">Chloroplast</location>
    </subcellularLocation>
</comment>
<comment type="tissue specificity">
    <text evidence="4">Expressed in endodermal and peridermal cells in young and mature roots, in boundaries of stem lateral organs and developing seeds.</text>
</comment>
<comment type="similarity">
    <text evidence="6">Belongs to the 4-hydroxybenzoyl-CoA thioesterase family.</text>
</comment>
<keyword id="KW-0150">Chloroplast</keyword>
<keyword id="KW-0378">Hydrolase</keyword>
<keyword id="KW-0443">Lipid metabolism</keyword>
<keyword id="KW-0934">Plastid</keyword>
<keyword id="KW-1185">Reference proteome</keyword>
<keyword id="KW-0809">Transit peptide</keyword>
<sequence>MFQATSTGAQIMHAAFPRSWRRGHVLPLRSAKIFKPLACLELRGSTGIGGFHEIELKVRDYELDQFGVVNNAVYANYCQHGRHEFMDSIGINCNEVSRSGGALAIPELTIKFLAPLRSGCRFVVKTRISGISLVRIYFEQFIFKLPNQEPILEAKGTAVWLDNKYRPTRVPSHVRSYFGHFQCQHLVD</sequence>
<dbReference type="EC" id="3.1.2.-" evidence="6"/>
<dbReference type="EMBL" id="AC069160">
    <property type="protein sequence ID" value="AAG51460.1"/>
    <property type="molecule type" value="Genomic_DNA"/>
</dbReference>
<dbReference type="EMBL" id="CP002684">
    <property type="protein sequence ID" value="AEE31773.1"/>
    <property type="molecule type" value="Genomic_DNA"/>
</dbReference>
<dbReference type="EMBL" id="BT024833">
    <property type="protein sequence ID" value="ABD60716.1"/>
    <property type="molecule type" value="mRNA"/>
</dbReference>
<dbReference type="PIR" id="E86473">
    <property type="entry name" value="E86473"/>
</dbReference>
<dbReference type="RefSeq" id="NP_174759.1">
    <property type="nucleotide sequence ID" value="NM_103223.4"/>
</dbReference>
<dbReference type="SMR" id="Q9C7I8"/>
<dbReference type="FunCoup" id="Q9C7I8">
    <property type="interactions" value="4"/>
</dbReference>
<dbReference type="PaxDb" id="3702-AT1G35250.1"/>
<dbReference type="ProteomicsDB" id="244420"/>
<dbReference type="EnsemblPlants" id="AT1G35250.1">
    <property type="protein sequence ID" value="AT1G35250.1"/>
    <property type="gene ID" value="AT1G35250"/>
</dbReference>
<dbReference type="GeneID" id="840414"/>
<dbReference type="Gramene" id="AT1G35250.1">
    <property type="protein sequence ID" value="AT1G35250.1"/>
    <property type="gene ID" value="AT1G35250"/>
</dbReference>
<dbReference type="KEGG" id="ath:AT1G35250"/>
<dbReference type="Araport" id="AT1G35250"/>
<dbReference type="TAIR" id="AT1G35250">
    <property type="gene designation" value="ALT2"/>
</dbReference>
<dbReference type="eggNOG" id="ENOG502RYRP">
    <property type="taxonomic scope" value="Eukaryota"/>
</dbReference>
<dbReference type="HOGENOM" id="CLU_101141_1_2_1"/>
<dbReference type="InParanoid" id="Q9C7I8"/>
<dbReference type="OMA" id="RDYECDI"/>
<dbReference type="PhylomeDB" id="Q9C7I8"/>
<dbReference type="PRO" id="PR:Q9C7I8"/>
<dbReference type="Proteomes" id="UP000006548">
    <property type="component" value="Chromosome 1"/>
</dbReference>
<dbReference type="ExpressionAtlas" id="Q9C7I8">
    <property type="expression patterns" value="baseline and differential"/>
</dbReference>
<dbReference type="GO" id="GO:0009507">
    <property type="term" value="C:chloroplast"/>
    <property type="evidence" value="ECO:0000314"/>
    <property type="project" value="UniProtKB"/>
</dbReference>
<dbReference type="GO" id="GO:0005634">
    <property type="term" value="C:nucleus"/>
    <property type="evidence" value="ECO:0007005"/>
    <property type="project" value="TAIR"/>
</dbReference>
<dbReference type="GO" id="GO:0016297">
    <property type="term" value="F:fatty acyl-[ACP] hydrolase activity"/>
    <property type="evidence" value="ECO:0000314"/>
    <property type="project" value="UniProtKB"/>
</dbReference>
<dbReference type="GO" id="GO:0006629">
    <property type="term" value="P:lipid metabolic process"/>
    <property type="evidence" value="ECO:0007669"/>
    <property type="project" value="UniProtKB-KW"/>
</dbReference>
<dbReference type="CDD" id="cd00586">
    <property type="entry name" value="4HBT"/>
    <property type="match status" value="1"/>
</dbReference>
<dbReference type="FunFam" id="3.10.129.10:FF:000037">
    <property type="entry name" value="acyl-acyl carrier protein thioesterase ATL3, chloroplastic"/>
    <property type="match status" value="1"/>
</dbReference>
<dbReference type="Gene3D" id="3.10.129.10">
    <property type="entry name" value="Hotdog Thioesterase"/>
    <property type="match status" value="1"/>
</dbReference>
<dbReference type="InterPro" id="IPR050563">
    <property type="entry name" value="4-hydroxybenzoyl-CoA_TE"/>
</dbReference>
<dbReference type="InterPro" id="IPR029069">
    <property type="entry name" value="HotDog_dom_sf"/>
</dbReference>
<dbReference type="PANTHER" id="PTHR31793">
    <property type="entry name" value="4-HYDROXYBENZOYL-COA THIOESTERASE FAMILY MEMBER"/>
    <property type="match status" value="1"/>
</dbReference>
<dbReference type="PANTHER" id="PTHR31793:SF27">
    <property type="entry name" value="NOVEL THIOESTERASE SUPERFAMILY DOMAIN AND SAPOSIN A-TYPE DOMAIN CONTAINING PROTEIN (0610012H03RIK)"/>
    <property type="match status" value="1"/>
</dbReference>
<dbReference type="Pfam" id="PF13279">
    <property type="entry name" value="4HBT_2"/>
    <property type="match status" value="1"/>
</dbReference>
<dbReference type="SUPFAM" id="SSF54637">
    <property type="entry name" value="Thioesterase/thiol ester dehydrase-isomerase"/>
    <property type="match status" value="1"/>
</dbReference>
<protein>
    <recommendedName>
        <fullName evidence="6">Acyl-acyl carrier protein thioesterase ATL2, chloroplastic</fullName>
        <ecNumber evidence="6">3.1.2.-</ecNumber>
    </recommendedName>
    <alternativeName>
        <fullName evidence="6">Acyl-ACP thioesterase ATL2</fullName>
    </alternativeName>
    <alternativeName>
        <fullName evidence="5">Acyl-lipid thioesterase 2</fullName>
    </alternativeName>
</protein>
<proteinExistence type="evidence at transcript level"/>
<gene>
    <name evidence="5" type="primary">ALT2</name>
    <name evidence="7" type="ordered locus">At1g35250</name>
    <name evidence="8" type="ORF">T9I1.4</name>
</gene>
<organism>
    <name type="scientific">Arabidopsis thaliana</name>
    <name type="common">Mouse-ear cress</name>
    <dbReference type="NCBI Taxonomy" id="3702"/>
    <lineage>
        <taxon>Eukaryota</taxon>
        <taxon>Viridiplantae</taxon>
        <taxon>Streptophyta</taxon>
        <taxon>Embryophyta</taxon>
        <taxon>Tracheophyta</taxon>
        <taxon>Spermatophyta</taxon>
        <taxon>Magnoliopsida</taxon>
        <taxon>eudicotyledons</taxon>
        <taxon>Gunneridae</taxon>
        <taxon>Pentapetalae</taxon>
        <taxon>rosids</taxon>
        <taxon>malvids</taxon>
        <taxon>Brassicales</taxon>
        <taxon>Brassicaceae</taxon>
        <taxon>Camelineae</taxon>
        <taxon>Arabidopsis</taxon>
    </lineage>
</organism>
<feature type="transit peptide" description="Chloroplast" evidence="3">
    <location>
        <begin position="1"/>
        <end position="47"/>
    </location>
</feature>
<feature type="chain" id="PRO_0000435262" description="Acyl-acyl carrier protein thioesterase ATL2, chloroplastic">
    <location>
        <begin position="48"/>
        <end position="188"/>
    </location>
</feature>
<feature type="active site" evidence="1 2">
    <location>
        <position position="64"/>
    </location>
</feature>
<evidence type="ECO:0000250" key="1">
    <source>
        <dbReference type="UniProtKB" id="P56653"/>
    </source>
</evidence>
<evidence type="ECO:0000250" key="2">
    <source>
        <dbReference type="UniProtKB" id="Q9C7I5"/>
    </source>
</evidence>
<evidence type="ECO:0000255" key="3"/>
<evidence type="ECO:0000269" key="4">
    <source>
    </source>
</evidence>
<evidence type="ECO:0000303" key="5">
    <source>
    </source>
</evidence>
<evidence type="ECO:0000305" key="6"/>
<evidence type="ECO:0000312" key="7">
    <source>
        <dbReference type="Araport" id="AT1G35250"/>
    </source>
</evidence>
<evidence type="ECO:0000312" key="8">
    <source>
        <dbReference type="EMBL" id="AAG51460.1"/>
    </source>
</evidence>
<name>ALT2_ARATH</name>
<accession>Q9C7I8</accession>
<reference key="1">
    <citation type="journal article" date="2000" name="Nature">
        <title>Sequence and analysis of chromosome 1 of the plant Arabidopsis thaliana.</title>
        <authorList>
            <person name="Theologis A."/>
            <person name="Ecker J.R."/>
            <person name="Palm C.J."/>
            <person name="Federspiel N.A."/>
            <person name="Kaul S."/>
            <person name="White O."/>
            <person name="Alonso J."/>
            <person name="Altafi H."/>
            <person name="Araujo R."/>
            <person name="Bowman C.L."/>
            <person name="Brooks S.Y."/>
            <person name="Buehler E."/>
            <person name="Chan A."/>
            <person name="Chao Q."/>
            <person name="Chen H."/>
            <person name="Cheuk R.F."/>
            <person name="Chin C.W."/>
            <person name="Chung M.K."/>
            <person name="Conn L."/>
            <person name="Conway A.B."/>
            <person name="Conway A.R."/>
            <person name="Creasy T.H."/>
            <person name="Dewar K."/>
            <person name="Dunn P."/>
            <person name="Etgu P."/>
            <person name="Feldblyum T.V."/>
            <person name="Feng J.-D."/>
            <person name="Fong B."/>
            <person name="Fujii C.Y."/>
            <person name="Gill J.E."/>
            <person name="Goldsmith A.D."/>
            <person name="Haas B."/>
            <person name="Hansen N.F."/>
            <person name="Hughes B."/>
            <person name="Huizar L."/>
            <person name="Hunter J.L."/>
            <person name="Jenkins J."/>
            <person name="Johnson-Hopson C."/>
            <person name="Khan S."/>
            <person name="Khaykin E."/>
            <person name="Kim C.J."/>
            <person name="Koo H.L."/>
            <person name="Kremenetskaia I."/>
            <person name="Kurtz D.B."/>
            <person name="Kwan A."/>
            <person name="Lam B."/>
            <person name="Langin-Hooper S."/>
            <person name="Lee A."/>
            <person name="Lee J.M."/>
            <person name="Lenz C.A."/>
            <person name="Li J.H."/>
            <person name="Li Y.-P."/>
            <person name="Lin X."/>
            <person name="Liu S.X."/>
            <person name="Liu Z.A."/>
            <person name="Luros J.S."/>
            <person name="Maiti R."/>
            <person name="Marziali A."/>
            <person name="Militscher J."/>
            <person name="Miranda M."/>
            <person name="Nguyen M."/>
            <person name="Nierman W.C."/>
            <person name="Osborne B.I."/>
            <person name="Pai G."/>
            <person name="Peterson J."/>
            <person name="Pham P.K."/>
            <person name="Rizzo M."/>
            <person name="Rooney T."/>
            <person name="Rowley D."/>
            <person name="Sakano H."/>
            <person name="Salzberg S.L."/>
            <person name="Schwartz J.R."/>
            <person name="Shinn P."/>
            <person name="Southwick A.M."/>
            <person name="Sun H."/>
            <person name="Tallon L.J."/>
            <person name="Tambunga G."/>
            <person name="Toriumi M.J."/>
            <person name="Town C.D."/>
            <person name="Utterback T."/>
            <person name="Van Aken S."/>
            <person name="Vaysberg M."/>
            <person name="Vysotskaia V.S."/>
            <person name="Walker M."/>
            <person name="Wu D."/>
            <person name="Yu G."/>
            <person name="Fraser C.M."/>
            <person name="Venter J.C."/>
            <person name="Davis R.W."/>
        </authorList>
    </citation>
    <scope>NUCLEOTIDE SEQUENCE [LARGE SCALE GENOMIC DNA]</scope>
    <source>
        <strain>cv. Columbia</strain>
    </source>
</reference>
<reference key="2">
    <citation type="journal article" date="2017" name="Plant J.">
        <title>Araport11: a complete reannotation of the Arabidopsis thaliana reference genome.</title>
        <authorList>
            <person name="Cheng C.Y."/>
            <person name="Krishnakumar V."/>
            <person name="Chan A.P."/>
            <person name="Thibaud-Nissen F."/>
            <person name="Schobel S."/>
            <person name="Town C.D."/>
        </authorList>
    </citation>
    <scope>GENOME REANNOTATION</scope>
    <source>
        <strain>cv. Columbia</strain>
    </source>
</reference>
<reference key="3">
    <citation type="submission" date="2006-03" db="EMBL/GenBank/DDBJ databases">
        <title>Arabidopsis ORF clones.</title>
        <authorList>
            <person name="Kim C.J."/>
            <person name="Chen H."/>
            <person name="Shinn P."/>
            <person name="Ecker J.R."/>
        </authorList>
    </citation>
    <scope>NUCLEOTIDE SEQUENCE [LARGE SCALE MRNA]</scope>
    <source>
        <strain>cv. Columbia</strain>
    </source>
</reference>
<reference key="4">
    <citation type="journal article" date="2014" name="Plant Mol. Biol.">
        <title>Acyl-lipid thioesterase1-4 from Arabidopsis thaliana form a novel family of fatty acyl-acyl carrier protein thioesterases with divergent expression patterns and substrate specificities.</title>
        <authorList>
            <person name="Pulsifer I.P."/>
            <person name="Lowe C."/>
            <person name="Narayaran S.A."/>
            <person name="Busuttil A.S."/>
            <person name="Vishwanath S.J."/>
            <person name="Domergue F."/>
            <person name="Rowland O."/>
        </authorList>
    </citation>
    <scope>FUNCTION</scope>
    <scope>SUBCELLULAR LOCATION</scope>
    <scope>TISSUE SPECIFICITY</scope>
</reference>